<keyword id="KW-0028">Amino-acid biosynthesis</keyword>
<keyword id="KW-0057">Aromatic amino acid biosynthesis</keyword>
<keyword id="KW-0963">Cytoplasm</keyword>
<keyword id="KW-1185">Reference proteome</keyword>
<keyword id="KW-0808">Transferase</keyword>
<protein>
    <recommendedName>
        <fullName evidence="1">3-phosphoshikimate 1-carboxyvinyltransferase</fullName>
        <ecNumber evidence="1">2.5.1.19</ecNumber>
    </recommendedName>
    <alternativeName>
        <fullName evidence="1">5-enolpyruvylshikimate-3-phosphate synthase</fullName>
        <shortName evidence="1">EPSP synthase</shortName>
        <shortName evidence="1">EPSPS</shortName>
    </alternativeName>
</protein>
<dbReference type="EC" id="2.5.1.19" evidence="1"/>
<dbReference type="EMBL" id="BA000035">
    <property type="protein sequence ID" value="BAC17589.1"/>
    <property type="molecule type" value="Genomic_DNA"/>
</dbReference>
<dbReference type="SMR" id="Q8FRI2"/>
<dbReference type="STRING" id="196164.gene:10741181"/>
<dbReference type="KEGG" id="cef:CE0779"/>
<dbReference type="eggNOG" id="COG0128">
    <property type="taxonomic scope" value="Bacteria"/>
</dbReference>
<dbReference type="HOGENOM" id="CLU_024321_0_0_11"/>
<dbReference type="UniPathway" id="UPA00053">
    <property type="reaction ID" value="UER00089"/>
</dbReference>
<dbReference type="Proteomes" id="UP000001409">
    <property type="component" value="Chromosome"/>
</dbReference>
<dbReference type="GO" id="GO:0005737">
    <property type="term" value="C:cytoplasm"/>
    <property type="evidence" value="ECO:0007669"/>
    <property type="project" value="UniProtKB-SubCell"/>
</dbReference>
<dbReference type="GO" id="GO:0003866">
    <property type="term" value="F:3-phosphoshikimate 1-carboxyvinyltransferase activity"/>
    <property type="evidence" value="ECO:0007669"/>
    <property type="project" value="UniProtKB-UniRule"/>
</dbReference>
<dbReference type="GO" id="GO:0008652">
    <property type="term" value="P:amino acid biosynthetic process"/>
    <property type="evidence" value="ECO:0007669"/>
    <property type="project" value="UniProtKB-KW"/>
</dbReference>
<dbReference type="GO" id="GO:0009073">
    <property type="term" value="P:aromatic amino acid family biosynthetic process"/>
    <property type="evidence" value="ECO:0007669"/>
    <property type="project" value="UniProtKB-KW"/>
</dbReference>
<dbReference type="GO" id="GO:0009423">
    <property type="term" value="P:chorismate biosynthetic process"/>
    <property type="evidence" value="ECO:0007669"/>
    <property type="project" value="UniProtKB-UniRule"/>
</dbReference>
<dbReference type="CDD" id="cd01556">
    <property type="entry name" value="EPSP_synthase"/>
    <property type="match status" value="1"/>
</dbReference>
<dbReference type="FunFam" id="3.65.10.10:FF:000010">
    <property type="entry name" value="3-phosphoshikimate 1-carboxyvinyltransferase"/>
    <property type="match status" value="1"/>
</dbReference>
<dbReference type="FunFam" id="3.65.10.10:FF:000011">
    <property type="entry name" value="3-phosphoshikimate 1-carboxyvinyltransferase"/>
    <property type="match status" value="1"/>
</dbReference>
<dbReference type="Gene3D" id="3.65.10.10">
    <property type="entry name" value="Enolpyruvate transferase domain"/>
    <property type="match status" value="2"/>
</dbReference>
<dbReference type="HAMAP" id="MF_00210">
    <property type="entry name" value="EPSP_synth"/>
    <property type="match status" value="1"/>
</dbReference>
<dbReference type="InterPro" id="IPR001986">
    <property type="entry name" value="Enolpyruvate_Tfrase_dom"/>
</dbReference>
<dbReference type="InterPro" id="IPR036968">
    <property type="entry name" value="Enolpyruvate_Tfrase_sf"/>
</dbReference>
<dbReference type="InterPro" id="IPR006264">
    <property type="entry name" value="EPSP_synthase"/>
</dbReference>
<dbReference type="InterPro" id="IPR023193">
    <property type="entry name" value="EPSP_synthase_CS"/>
</dbReference>
<dbReference type="InterPro" id="IPR013792">
    <property type="entry name" value="RNA3'P_cycl/enolpyr_Trfase_a/b"/>
</dbReference>
<dbReference type="NCBIfam" id="TIGR01356">
    <property type="entry name" value="aroA"/>
    <property type="match status" value="1"/>
</dbReference>
<dbReference type="PANTHER" id="PTHR21090">
    <property type="entry name" value="AROM/DEHYDROQUINATE SYNTHASE"/>
    <property type="match status" value="1"/>
</dbReference>
<dbReference type="PANTHER" id="PTHR21090:SF5">
    <property type="entry name" value="PENTAFUNCTIONAL AROM POLYPEPTIDE"/>
    <property type="match status" value="1"/>
</dbReference>
<dbReference type="Pfam" id="PF00275">
    <property type="entry name" value="EPSP_synthase"/>
    <property type="match status" value="1"/>
</dbReference>
<dbReference type="PIRSF" id="PIRSF000505">
    <property type="entry name" value="EPSPS"/>
    <property type="match status" value="1"/>
</dbReference>
<dbReference type="SUPFAM" id="SSF55205">
    <property type="entry name" value="EPT/RTPC-like"/>
    <property type="match status" value="1"/>
</dbReference>
<dbReference type="PROSITE" id="PS00104">
    <property type="entry name" value="EPSP_SYNTHASE_1"/>
    <property type="match status" value="1"/>
</dbReference>
<dbReference type="PROSITE" id="PS00885">
    <property type="entry name" value="EPSP_SYNTHASE_2"/>
    <property type="match status" value="1"/>
</dbReference>
<reference key="1">
    <citation type="journal article" date="2003" name="Genome Res.">
        <title>Comparative complete genome sequence analysis of the amino acid replacements responsible for the thermostability of Corynebacterium efficiens.</title>
        <authorList>
            <person name="Nishio Y."/>
            <person name="Nakamura Y."/>
            <person name="Kawarabayasi Y."/>
            <person name="Usuda Y."/>
            <person name="Kimura E."/>
            <person name="Sugimoto S."/>
            <person name="Matsui K."/>
            <person name="Yamagishi A."/>
            <person name="Kikuchi H."/>
            <person name="Ikeo K."/>
            <person name="Gojobori T."/>
        </authorList>
    </citation>
    <scope>NUCLEOTIDE SEQUENCE [LARGE SCALE GENOMIC DNA]</scope>
    <source>
        <strain>DSM 44549 / YS-314 / AJ 12310 / JCM 11189 / NBRC 100395</strain>
    </source>
</reference>
<organism>
    <name type="scientific">Corynebacterium efficiens (strain DSM 44549 / YS-314 / AJ 12310 / JCM 11189 / NBRC 100395)</name>
    <dbReference type="NCBI Taxonomy" id="196164"/>
    <lineage>
        <taxon>Bacteria</taxon>
        <taxon>Bacillati</taxon>
        <taxon>Actinomycetota</taxon>
        <taxon>Actinomycetes</taxon>
        <taxon>Mycobacteriales</taxon>
        <taxon>Corynebacteriaceae</taxon>
        <taxon>Corynebacterium</taxon>
    </lineage>
</organism>
<proteinExistence type="inferred from homology"/>
<evidence type="ECO:0000255" key="1">
    <source>
        <dbReference type="HAMAP-Rule" id="MF_00210"/>
    </source>
</evidence>
<sequence length="408" mass="43612">MWPQVIPGSKSITNRALILAALAAGPSTIHGVLRSRDTDLMADALRSMGVTITEEAPDRYHVEPPAELSSGSIDCGLAGTVMRFVPPVAAFADGPVHFDGDEQARIRPMTSILDALRTLGVRVENNRLPFTVTSDGIPEGGVVEIDASASSQFVSGLLLSAPRFVNGVTVRHIGGRLPSMPHIEMTVAMLREVGIRVDVTPNQWTVHPGEIRGHTWRIEPDLSNATPFLAAAAVTRGTVTVRNWPRDTTQPGDSIRSILEDMGCTVEFISNGATFDLEVTGPAELKGIHLDMSDIGELTPTVAALAALATTESRLTGIAHLRGHETNRLEALTAEINRLGGNCTELDDGLHITPAPLHGGVWHSYADHRMATAGAIIGLVIKDVGVEDIQTTSKTFPGFETLWEEMVG</sequence>
<accession>Q8FRI2</accession>
<feature type="chain" id="PRO_0000088250" description="3-phosphoshikimate 1-carboxyvinyltransferase">
    <location>
        <begin position="1"/>
        <end position="408"/>
    </location>
</feature>
<feature type="active site" description="Proton acceptor" evidence="1">
    <location>
        <position position="297"/>
    </location>
</feature>
<feature type="binding site" evidence="1">
    <location>
        <position position="10"/>
    </location>
    <ligand>
        <name>3-phosphoshikimate</name>
        <dbReference type="ChEBI" id="CHEBI:145989"/>
    </ligand>
</feature>
<feature type="binding site" evidence="1">
    <location>
        <position position="10"/>
    </location>
    <ligand>
        <name>phosphoenolpyruvate</name>
        <dbReference type="ChEBI" id="CHEBI:58702"/>
    </ligand>
</feature>
<feature type="binding site" evidence="1">
    <location>
        <position position="11"/>
    </location>
    <ligand>
        <name>3-phosphoshikimate</name>
        <dbReference type="ChEBI" id="CHEBI:145989"/>
    </ligand>
</feature>
<feature type="binding site" evidence="1">
    <location>
        <position position="15"/>
    </location>
    <ligand>
        <name>3-phosphoshikimate</name>
        <dbReference type="ChEBI" id="CHEBI:145989"/>
    </ligand>
</feature>
<feature type="binding site" evidence="1">
    <location>
        <position position="79"/>
    </location>
    <ligand>
        <name>phosphoenolpyruvate</name>
        <dbReference type="ChEBI" id="CHEBI:58702"/>
    </ligand>
</feature>
<feature type="binding site" evidence="1">
    <location>
        <position position="107"/>
    </location>
    <ligand>
        <name>phosphoenolpyruvate</name>
        <dbReference type="ChEBI" id="CHEBI:58702"/>
    </ligand>
</feature>
<feature type="binding site" evidence="1">
    <location>
        <position position="150"/>
    </location>
    <ligand>
        <name>3-phosphoshikimate</name>
        <dbReference type="ChEBI" id="CHEBI:145989"/>
    </ligand>
</feature>
<feature type="binding site" evidence="1">
    <location>
        <position position="151"/>
    </location>
    <ligand>
        <name>3-phosphoshikimate</name>
        <dbReference type="ChEBI" id="CHEBI:145989"/>
    </ligand>
</feature>
<feature type="binding site" evidence="1">
    <location>
        <position position="152"/>
    </location>
    <ligand>
        <name>3-phosphoshikimate</name>
        <dbReference type="ChEBI" id="CHEBI:145989"/>
    </ligand>
</feature>
<feature type="binding site" evidence="1">
    <location>
        <position position="152"/>
    </location>
    <ligand>
        <name>phosphoenolpyruvate</name>
        <dbReference type="ChEBI" id="CHEBI:58702"/>
    </ligand>
</feature>
<feature type="binding site" evidence="1">
    <location>
        <position position="179"/>
    </location>
    <ligand>
        <name>3-phosphoshikimate</name>
        <dbReference type="ChEBI" id="CHEBI:145989"/>
    </ligand>
</feature>
<feature type="binding site" evidence="1">
    <location>
        <position position="297"/>
    </location>
    <ligand>
        <name>3-phosphoshikimate</name>
        <dbReference type="ChEBI" id="CHEBI:145989"/>
    </ligand>
</feature>
<feature type="binding site" evidence="1">
    <location>
        <position position="324"/>
    </location>
    <ligand>
        <name>3-phosphoshikimate</name>
        <dbReference type="ChEBI" id="CHEBI:145989"/>
    </ligand>
</feature>
<feature type="binding site" evidence="1">
    <location>
        <position position="328"/>
    </location>
    <ligand>
        <name>phosphoenolpyruvate</name>
        <dbReference type="ChEBI" id="CHEBI:58702"/>
    </ligand>
</feature>
<feature type="binding site" evidence="1">
    <location>
        <position position="369"/>
    </location>
    <ligand>
        <name>phosphoenolpyruvate</name>
        <dbReference type="ChEBI" id="CHEBI:58702"/>
    </ligand>
</feature>
<feature type="binding site" evidence="1">
    <location>
        <position position="394"/>
    </location>
    <ligand>
        <name>phosphoenolpyruvate</name>
        <dbReference type="ChEBI" id="CHEBI:58702"/>
    </ligand>
</feature>
<comment type="function">
    <text evidence="1">Catalyzes the transfer of the enolpyruvyl moiety of phosphoenolpyruvate (PEP) to the 5-hydroxyl of shikimate-3-phosphate (S3P) to produce enolpyruvyl shikimate-3-phosphate and inorganic phosphate.</text>
</comment>
<comment type="catalytic activity">
    <reaction evidence="1">
        <text>3-phosphoshikimate + phosphoenolpyruvate = 5-O-(1-carboxyvinyl)-3-phosphoshikimate + phosphate</text>
        <dbReference type="Rhea" id="RHEA:21256"/>
        <dbReference type="ChEBI" id="CHEBI:43474"/>
        <dbReference type="ChEBI" id="CHEBI:57701"/>
        <dbReference type="ChEBI" id="CHEBI:58702"/>
        <dbReference type="ChEBI" id="CHEBI:145989"/>
        <dbReference type="EC" id="2.5.1.19"/>
    </reaction>
    <physiologicalReaction direction="left-to-right" evidence="1">
        <dbReference type="Rhea" id="RHEA:21257"/>
    </physiologicalReaction>
</comment>
<comment type="pathway">
    <text evidence="1">Metabolic intermediate biosynthesis; chorismate biosynthesis; chorismate from D-erythrose 4-phosphate and phosphoenolpyruvate: step 6/7.</text>
</comment>
<comment type="subunit">
    <text evidence="1">Monomer.</text>
</comment>
<comment type="subcellular location">
    <subcellularLocation>
        <location evidence="1">Cytoplasm</location>
    </subcellularLocation>
</comment>
<comment type="similarity">
    <text evidence="1">Belongs to the EPSP synthase family.</text>
</comment>
<name>AROA_COREF</name>
<gene>
    <name evidence="1" type="primary">aroA</name>
    <name type="ordered locus">CE0779</name>
</gene>